<sequence length="261" mass="28866">MVAPTAVKRQEEATAGPSRILGDGAPTAMIDEDDDEILIDQDMEEEAPKKSKKEAAGVVLDESGKPRFGAAKDQATTKVKLESRKVPVPPHRMTPLRNSWNKIYPPLVDHLKLQVRMNLKTRTVELRTHPKHTTDPGALQKGADFIKAFTLGFDLDDSIALLRLDDLYIETFEVKDVKTLTGDHLSRAIGRIAGKDGKTKFAIENATRTRIVLADSKIHILGGFTHIRMAREAVVSLILGSPPGKVYGNLRTVASRLKERY</sequence>
<organism>
    <name type="scientific">Candida glabrata (strain ATCC 2001 / BCRC 20586 / JCM 3761 / NBRC 0622 / NRRL Y-65 / CBS 138)</name>
    <name type="common">Yeast</name>
    <name type="synonym">Nakaseomyces glabratus</name>
    <dbReference type="NCBI Taxonomy" id="284593"/>
    <lineage>
        <taxon>Eukaryota</taxon>
        <taxon>Fungi</taxon>
        <taxon>Dikarya</taxon>
        <taxon>Ascomycota</taxon>
        <taxon>Saccharomycotina</taxon>
        <taxon>Saccharomycetes</taxon>
        <taxon>Saccharomycetales</taxon>
        <taxon>Saccharomycetaceae</taxon>
        <taxon>Nakaseomyces</taxon>
    </lineage>
</organism>
<evidence type="ECO:0000250" key="1"/>
<evidence type="ECO:0000250" key="2">
    <source>
        <dbReference type="UniProtKB" id="Q99216"/>
    </source>
</evidence>
<evidence type="ECO:0000256" key="3">
    <source>
        <dbReference type="SAM" id="MobiDB-lite"/>
    </source>
</evidence>
<evidence type="ECO:0000305" key="4"/>
<accession>Q6FMB3</accession>
<feature type="chain" id="PRO_0000278366" description="Pre-rRNA-processing protein PNO1">
    <location>
        <begin position="1"/>
        <end position="261"/>
    </location>
</feature>
<feature type="domain" description="KH">
    <location>
        <begin position="182"/>
        <end position="234"/>
    </location>
</feature>
<feature type="region of interest" description="Disordered" evidence="3">
    <location>
        <begin position="1"/>
        <end position="29"/>
    </location>
</feature>
<dbReference type="EMBL" id="CR380957">
    <property type="protein sequence ID" value="CAG61594.1"/>
    <property type="molecule type" value="Genomic_DNA"/>
</dbReference>
<dbReference type="RefSeq" id="XP_448631.1">
    <property type="nucleotide sequence ID" value="XM_448631.1"/>
</dbReference>
<dbReference type="SMR" id="Q6FMB3"/>
<dbReference type="FunCoup" id="Q6FMB3">
    <property type="interactions" value="1013"/>
</dbReference>
<dbReference type="STRING" id="284593.Q6FMB3"/>
<dbReference type="EnsemblFungi" id="CAGL0K09460g-T">
    <property type="protein sequence ID" value="CAGL0K09460g-T-p1"/>
    <property type="gene ID" value="CAGL0K09460g"/>
</dbReference>
<dbReference type="KEGG" id="cgr:2890233"/>
<dbReference type="CGD" id="CAL0134609">
    <property type="gene designation" value="CAGL0K09460g"/>
</dbReference>
<dbReference type="VEuPathDB" id="FungiDB:B1J91_K09460g"/>
<dbReference type="VEuPathDB" id="FungiDB:CAGL0K09460g"/>
<dbReference type="eggNOG" id="KOG3273">
    <property type="taxonomic scope" value="Eukaryota"/>
</dbReference>
<dbReference type="HOGENOM" id="CLU_064992_0_2_1"/>
<dbReference type="InParanoid" id="Q6FMB3"/>
<dbReference type="OMA" id="TPLRNNW"/>
<dbReference type="Proteomes" id="UP000002428">
    <property type="component" value="Chromosome K"/>
</dbReference>
<dbReference type="GO" id="GO:0005737">
    <property type="term" value="C:cytoplasm"/>
    <property type="evidence" value="ECO:0007669"/>
    <property type="project" value="UniProtKB-SubCell"/>
</dbReference>
<dbReference type="GO" id="GO:0005730">
    <property type="term" value="C:nucleolus"/>
    <property type="evidence" value="ECO:0007669"/>
    <property type="project" value="UniProtKB-SubCell"/>
</dbReference>
<dbReference type="GO" id="GO:0003723">
    <property type="term" value="F:RNA binding"/>
    <property type="evidence" value="ECO:0007669"/>
    <property type="project" value="UniProtKB-KW"/>
</dbReference>
<dbReference type="GO" id="GO:0042254">
    <property type="term" value="P:ribosome biogenesis"/>
    <property type="evidence" value="ECO:0007669"/>
    <property type="project" value="UniProtKB-KW"/>
</dbReference>
<dbReference type="CDD" id="cd22391">
    <property type="entry name" value="KH-I_PNO1_rpt1"/>
    <property type="match status" value="1"/>
</dbReference>
<dbReference type="CDD" id="cd22392">
    <property type="entry name" value="KH-I_PNO1_rpt2"/>
    <property type="match status" value="1"/>
</dbReference>
<dbReference type="FunFam" id="3.30.1370.10:FF:000009">
    <property type="entry name" value="RNA-binding protein PNO1"/>
    <property type="match status" value="1"/>
</dbReference>
<dbReference type="Gene3D" id="3.30.1370.10">
    <property type="entry name" value="K Homology domain, type 1"/>
    <property type="match status" value="1"/>
</dbReference>
<dbReference type="InterPro" id="IPR055212">
    <property type="entry name" value="KH-I_PNO1_first"/>
</dbReference>
<dbReference type="InterPro" id="IPR004087">
    <property type="entry name" value="KH_dom"/>
</dbReference>
<dbReference type="InterPro" id="IPR036612">
    <property type="entry name" value="KH_dom_type_1_sf"/>
</dbReference>
<dbReference type="InterPro" id="IPR055211">
    <property type="entry name" value="KH_PNO1_2nd"/>
</dbReference>
<dbReference type="PANTHER" id="PTHR12826">
    <property type="entry name" value="RIBONUCLEASE Y"/>
    <property type="match status" value="1"/>
</dbReference>
<dbReference type="PANTHER" id="PTHR12826:SF13">
    <property type="entry name" value="RNA-BINDING PROTEIN PNO1"/>
    <property type="match status" value="1"/>
</dbReference>
<dbReference type="Pfam" id="PF22891">
    <property type="entry name" value="KH_PNO1_2nd"/>
    <property type="match status" value="1"/>
</dbReference>
<dbReference type="SMART" id="SM00322">
    <property type="entry name" value="KH"/>
    <property type="match status" value="1"/>
</dbReference>
<dbReference type="SUPFAM" id="SSF54791">
    <property type="entry name" value="Eukaryotic type KH-domain (KH-domain type I)"/>
    <property type="match status" value="1"/>
</dbReference>
<proteinExistence type="inferred from homology"/>
<protein>
    <recommendedName>
        <fullName>Pre-rRNA-processing protein PNO1</fullName>
    </recommendedName>
</protein>
<comment type="function">
    <text evidence="1">Required for small ribosomal subunit (SSU) synthesis. Has a role in the processing of early nucleolar and late cytoplasmic pre-RNA species (By similarity).</text>
</comment>
<comment type="subunit">
    <text evidence="1">Component of the small ribosomal subunit, ribosomal RNA processing complex (SSU RRP complex).</text>
</comment>
<comment type="subcellular location">
    <subcellularLocation>
        <location evidence="2">Cytoplasm</location>
    </subcellularLocation>
    <subcellularLocation>
        <location evidence="2">Nucleus</location>
        <location evidence="2">Nucleolus</location>
    </subcellularLocation>
</comment>
<comment type="similarity">
    <text evidence="4">Belongs to the PNO1 family.</text>
</comment>
<keyword id="KW-0963">Cytoplasm</keyword>
<keyword id="KW-0539">Nucleus</keyword>
<keyword id="KW-1185">Reference proteome</keyword>
<keyword id="KW-0690">Ribosome biogenesis</keyword>
<keyword id="KW-0694">RNA-binding</keyword>
<reference key="1">
    <citation type="journal article" date="2004" name="Nature">
        <title>Genome evolution in yeasts.</title>
        <authorList>
            <person name="Dujon B."/>
            <person name="Sherman D."/>
            <person name="Fischer G."/>
            <person name="Durrens P."/>
            <person name="Casaregola S."/>
            <person name="Lafontaine I."/>
            <person name="de Montigny J."/>
            <person name="Marck C."/>
            <person name="Neuveglise C."/>
            <person name="Talla E."/>
            <person name="Goffard N."/>
            <person name="Frangeul L."/>
            <person name="Aigle M."/>
            <person name="Anthouard V."/>
            <person name="Babour A."/>
            <person name="Barbe V."/>
            <person name="Barnay S."/>
            <person name="Blanchin S."/>
            <person name="Beckerich J.-M."/>
            <person name="Beyne E."/>
            <person name="Bleykasten C."/>
            <person name="Boisrame A."/>
            <person name="Boyer J."/>
            <person name="Cattolico L."/>
            <person name="Confanioleri F."/>
            <person name="de Daruvar A."/>
            <person name="Despons L."/>
            <person name="Fabre E."/>
            <person name="Fairhead C."/>
            <person name="Ferry-Dumazet H."/>
            <person name="Groppi A."/>
            <person name="Hantraye F."/>
            <person name="Hennequin C."/>
            <person name="Jauniaux N."/>
            <person name="Joyet P."/>
            <person name="Kachouri R."/>
            <person name="Kerrest A."/>
            <person name="Koszul R."/>
            <person name="Lemaire M."/>
            <person name="Lesur I."/>
            <person name="Ma L."/>
            <person name="Muller H."/>
            <person name="Nicaud J.-M."/>
            <person name="Nikolski M."/>
            <person name="Oztas S."/>
            <person name="Ozier-Kalogeropoulos O."/>
            <person name="Pellenz S."/>
            <person name="Potier S."/>
            <person name="Richard G.-F."/>
            <person name="Straub M.-L."/>
            <person name="Suleau A."/>
            <person name="Swennen D."/>
            <person name="Tekaia F."/>
            <person name="Wesolowski-Louvel M."/>
            <person name="Westhof E."/>
            <person name="Wirth B."/>
            <person name="Zeniou-Meyer M."/>
            <person name="Zivanovic Y."/>
            <person name="Bolotin-Fukuhara M."/>
            <person name="Thierry A."/>
            <person name="Bouchier C."/>
            <person name="Caudron B."/>
            <person name="Scarpelli C."/>
            <person name="Gaillardin C."/>
            <person name="Weissenbach J."/>
            <person name="Wincker P."/>
            <person name="Souciet J.-L."/>
        </authorList>
    </citation>
    <scope>NUCLEOTIDE SEQUENCE [LARGE SCALE GENOMIC DNA]</scope>
    <source>
        <strain>ATCC 2001 / BCRC 20586 / JCM 3761 / NBRC 0622 / NRRL Y-65 / CBS 138</strain>
    </source>
</reference>
<name>PNO1_CANGA</name>
<gene>
    <name type="primary">PNO1</name>
    <name type="ordered locus">CAGL0K09460g</name>
</gene>